<accession>Q6J8E4</accession>
<keyword id="KW-0106">Calcium</keyword>
<keyword id="KW-1015">Disulfide bond</keyword>
<keyword id="KW-0325">Glycoprotein</keyword>
<keyword id="KW-0326">Glycosidase</keyword>
<keyword id="KW-1032">Host cell membrane</keyword>
<keyword id="KW-1043">Host membrane</keyword>
<keyword id="KW-0378">Hydrolase</keyword>
<keyword id="KW-0472">Membrane</keyword>
<keyword id="KW-0479">Metal-binding</keyword>
<keyword id="KW-0735">Signal-anchor</keyword>
<keyword id="KW-0812">Transmembrane</keyword>
<keyword id="KW-1133">Transmembrane helix</keyword>
<keyword id="KW-0946">Virion</keyword>
<proteinExistence type="inferred from homology"/>
<dbReference type="EC" id="3.2.1.18" evidence="1"/>
<dbReference type="EMBL" id="AY575881">
    <property type="protein sequence ID" value="AAT39081.1"/>
    <property type="molecule type" value="Genomic_DNA"/>
</dbReference>
<dbReference type="SMR" id="Q6J8E4"/>
<dbReference type="CAZy" id="GH34">
    <property type="family name" value="Glycoside Hydrolase Family 34"/>
</dbReference>
<dbReference type="GlyCosmos" id="Q6J8E4">
    <property type="glycosylation" value="8 sites, No reported glycans"/>
</dbReference>
<dbReference type="GO" id="GO:0020002">
    <property type="term" value="C:host cell plasma membrane"/>
    <property type="evidence" value="ECO:0007669"/>
    <property type="project" value="UniProtKB-SubCell"/>
</dbReference>
<dbReference type="GO" id="GO:0016020">
    <property type="term" value="C:membrane"/>
    <property type="evidence" value="ECO:0007669"/>
    <property type="project" value="UniProtKB-KW"/>
</dbReference>
<dbReference type="GO" id="GO:0055036">
    <property type="term" value="C:virion membrane"/>
    <property type="evidence" value="ECO:0007669"/>
    <property type="project" value="UniProtKB-SubCell"/>
</dbReference>
<dbReference type="GO" id="GO:0004308">
    <property type="term" value="F:exo-alpha-sialidase activity"/>
    <property type="evidence" value="ECO:0007669"/>
    <property type="project" value="UniProtKB-EC"/>
</dbReference>
<dbReference type="GO" id="GO:0046872">
    <property type="term" value="F:metal ion binding"/>
    <property type="evidence" value="ECO:0007669"/>
    <property type="project" value="UniProtKB-KW"/>
</dbReference>
<dbReference type="GO" id="GO:0005975">
    <property type="term" value="P:carbohydrate metabolic process"/>
    <property type="evidence" value="ECO:0007669"/>
    <property type="project" value="InterPro"/>
</dbReference>
<dbReference type="GO" id="GO:0046761">
    <property type="term" value="P:viral budding from plasma membrane"/>
    <property type="evidence" value="ECO:0007669"/>
    <property type="project" value="InterPro"/>
</dbReference>
<dbReference type="CDD" id="cd15483">
    <property type="entry name" value="Influenza_NA"/>
    <property type="match status" value="1"/>
</dbReference>
<dbReference type="FunFam" id="2.120.10.10:FF:000001">
    <property type="entry name" value="Neuraminidase"/>
    <property type="match status" value="1"/>
</dbReference>
<dbReference type="Gene3D" id="2.120.10.10">
    <property type="match status" value="1"/>
</dbReference>
<dbReference type="HAMAP" id="MF_04071">
    <property type="entry name" value="INFV_NRAM"/>
    <property type="match status" value="1"/>
</dbReference>
<dbReference type="InterPro" id="IPR001860">
    <property type="entry name" value="Glyco_hydro_34"/>
</dbReference>
<dbReference type="InterPro" id="IPR033654">
    <property type="entry name" value="Sialidase_Influenza_A/B"/>
</dbReference>
<dbReference type="InterPro" id="IPR036278">
    <property type="entry name" value="Sialidase_sf"/>
</dbReference>
<dbReference type="Pfam" id="PF00064">
    <property type="entry name" value="Neur"/>
    <property type="match status" value="1"/>
</dbReference>
<dbReference type="SUPFAM" id="SSF50939">
    <property type="entry name" value="Sialidases"/>
    <property type="match status" value="1"/>
</dbReference>
<name>NRAM_I03A0</name>
<evidence type="ECO:0000255" key="1">
    <source>
        <dbReference type="HAMAP-Rule" id="MF_04071"/>
    </source>
</evidence>
<feature type="chain" id="PRO_0000310941" description="Neuraminidase">
    <location>
        <begin position="1"/>
        <end position="469" status="greater than"/>
    </location>
</feature>
<feature type="topological domain" description="Intravirion" evidence="1">
    <location>
        <begin position="1"/>
        <end position="12"/>
    </location>
</feature>
<feature type="transmembrane region" description="Helical" evidence="1">
    <location>
        <begin position="13"/>
        <end position="33"/>
    </location>
</feature>
<feature type="topological domain" description="Virion surface" evidence="1">
    <location>
        <begin position="34"/>
        <end position="469"/>
    </location>
</feature>
<feature type="region of interest" description="Involved in apical transport and lipid raft association" evidence="1">
    <location>
        <begin position="11"/>
        <end position="33"/>
    </location>
</feature>
<feature type="region of interest" description="Hypervariable stalk region" evidence="1">
    <location>
        <begin position="36"/>
        <end position="90"/>
    </location>
</feature>
<feature type="region of interest" description="Head of neuraminidase" evidence="1">
    <location>
        <begin position="91"/>
        <end position="469"/>
    </location>
</feature>
<feature type="active site" description="Proton donor/acceptor" evidence="1">
    <location>
        <position position="151"/>
    </location>
</feature>
<feature type="active site" description="Nucleophile" evidence="1">
    <location>
        <position position="402"/>
    </location>
</feature>
<feature type="binding site" evidence="1">
    <location>
        <position position="118"/>
    </location>
    <ligand>
        <name>substrate</name>
    </ligand>
</feature>
<feature type="binding site" evidence="1">
    <location>
        <position position="152"/>
    </location>
    <ligand>
        <name>substrate</name>
    </ligand>
</feature>
<feature type="binding site" evidence="1">
    <location>
        <begin position="277"/>
        <end position="278"/>
    </location>
    <ligand>
        <name>substrate</name>
    </ligand>
</feature>
<feature type="binding site" evidence="1">
    <location>
        <position position="293"/>
    </location>
    <ligand>
        <name>substrate</name>
    </ligand>
</feature>
<feature type="binding site" evidence="1">
    <location>
        <position position="294"/>
    </location>
    <ligand>
        <name>Ca(2+)</name>
        <dbReference type="ChEBI" id="CHEBI:29108"/>
    </ligand>
</feature>
<feature type="binding site" evidence="1">
    <location>
        <position position="298"/>
    </location>
    <ligand>
        <name>Ca(2+)</name>
        <dbReference type="ChEBI" id="CHEBI:29108"/>
    </ligand>
</feature>
<feature type="binding site" evidence="1">
    <location>
        <position position="324"/>
    </location>
    <ligand>
        <name>Ca(2+)</name>
        <dbReference type="ChEBI" id="CHEBI:29108"/>
    </ligand>
</feature>
<feature type="binding site" evidence="1">
    <location>
        <position position="368"/>
    </location>
    <ligand>
        <name>substrate</name>
    </ligand>
</feature>
<feature type="glycosylation site" description="N-linked (GlcNAc...) asparagine; by host" evidence="1">
    <location>
        <position position="50"/>
    </location>
</feature>
<feature type="glycosylation site" description="N-linked (GlcNAc...) asparagine; by host" evidence="1">
    <location>
        <position position="58"/>
    </location>
</feature>
<feature type="glycosylation site" description="N-linked (GlcNAc...) asparagine; by host" evidence="1">
    <location>
        <position position="63"/>
    </location>
</feature>
<feature type="glycosylation site" description="N-linked (GlcNAc...) asparagine; by host" evidence="1">
    <location>
        <position position="68"/>
    </location>
</feature>
<feature type="glycosylation site" description="N-linked (GlcNAc...) asparagine; by host" evidence="1">
    <location>
        <position position="88"/>
    </location>
</feature>
<feature type="glycosylation site" description="N-linked (GlcNAc...) asparagine; by host" evidence="1">
    <location>
        <position position="146"/>
    </location>
</feature>
<feature type="glycosylation site" description="N-linked (GlcNAc...) asparagine; by host" evidence="1">
    <location>
        <position position="235"/>
    </location>
</feature>
<feature type="glycosylation site" description="N-linked (GlcNAc...) asparagine; by host" evidence="1">
    <location>
        <position position="386"/>
    </location>
</feature>
<feature type="disulfide bond" evidence="1">
    <location>
        <begin position="92"/>
        <end position="417"/>
    </location>
</feature>
<feature type="disulfide bond" evidence="1">
    <location>
        <begin position="124"/>
        <end position="129"/>
    </location>
</feature>
<feature type="disulfide bond" evidence="1">
    <location>
        <begin position="184"/>
        <end position="231"/>
    </location>
</feature>
<feature type="disulfide bond" evidence="1">
    <location>
        <begin position="233"/>
        <end position="238"/>
    </location>
</feature>
<feature type="disulfide bond" evidence="1">
    <location>
        <begin position="279"/>
        <end position="292"/>
    </location>
</feature>
<feature type="disulfide bond" evidence="1">
    <location>
        <begin position="281"/>
        <end position="290"/>
    </location>
</feature>
<feature type="disulfide bond" evidence="1">
    <location>
        <begin position="318"/>
        <end position="335"/>
    </location>
</feature>
<feature type="disulfide bond" evidence="1">
    <location>
        <begin position="421"/>
        <end position="446"/>
    </location>
</feature>
<feature type="non-terminal residue">
    <location>
        <position position="469"/>
    </location>
</feature>
<gene>
    <name evidence="1" type="primary">NA</name>
</gene>
<sequence>MNPNQKITTIGSICMVIGIVSLMLQIGNIISIWVSHSIQTGNQHQAEPCNQSIITYENNTWVNQTYVNISNTNFLTEKAVASVTLAGNSSLCPISGWAVYSKDNGIRIGSKGDVFVIREPFISCSHLECRTFFLTQGALLNDKHSNGTVKDRSPHRTLMSCPVGEAPSPYNSRFESVAWSASACHDGTSWLTIGISGPDNGAVAVLKYNGIITDTIKSWRNNIMRTQESECACVNGSCFTVMTDGPSNGQASYKIFRIEKGKVVKSAELNAPNYHYEECSCYPDAGEITCVCRDNWHGSNRPWVSFNQNLEYRIGYICSGVFGDNPRPNDGTGSCGPVSPKGAYGIKGFSFKYGNGVWIGRTKSTNSRSGFEMIWDPNGWTGTDSNFSVKQDIVAITDWSGYSGSFVQHPELTGLDCIRPCFWVELIRGRPKESTIWTSGSSISFCGVNSDTVGWSWPDGAELPFTIDK</sequence>
<protein>
    <recommendedName>
        <fullName evidence="1">Neuraminidase</fullName>
        <ecNumber evidence="1">3.2.1.18</ecNumber>
    </recommendedName>
</protein>
<reference key="1">
    <citation type="journal article" date="2004" name="Proc. Natl. Acad. Sci. U.S.A.">
        <title>H5N1 influenza: a protean pandemic threat.</title>
        <authorList>
            <person name="Guan Y."/>
            <person name="Poon L.L.M."/>
            <person name="Cheung C.Y."/>
            <person name="Ellis T.M."/>
            <person name="Lim W."/>
            <person name="Lipatov A.S."/>
            <person name="Chan K.H."/>
            <person name="Sturm-Ramirez K.M."/>
            <person name="Cheung C.L."/>
            <person name="Leung Y.H.C."/>
            <person name="Yuen K.Y."/>
            <person name="Webster R.G."/>
            <person name="Peiris J.S.M."/>
        </authorList>
    </citation>
    <scope>NUCLEOTIDE SEQUENCE [GENOMIC RNA]</scope>
</reference>
<organism>
    <name type="scientific">Influenza A virus (strain A/Hong Kong/212/2003 H5N1 genotype Z+)</name>
    <dbReference type="NCBI Taxonomy" id="279794"/>
    <lineage>
        <taxon>Viruses</taxon>
        <taxon>Riboviria</taxon>
        <taxon>Orthornavirae</taxon>
        <taxon>Negarnaviricota</taxon>
        <taxon>Polyploviricotina</taxon>
        <taxon>Insthoviricetes</taxon>
        <taxon>Articulavirales</taxon>
        <taxon>Orthomyxoviridae</taxon>
        <taxon>Alphainfluenzavirus</taxon>
        <taxon>Alphainfluenzavirus influenzae</taxon>
        <taxon>Influenza A virus</taxon>
    </lineage>
</organism>
<organismHost>
    <name type="scientific">Aves</name>
    <dbReference type="NCBI Taxonomy" id="8782"/>
</organismHost>
<organismHost>
    <name type="scientific">Felis catus</name>
    <name type="common">Cat</name>
    <name type="synonym">Felis silvestris catus</name>
    <dbReference type="NCBI Taxonomy" id="9685"/>
</organismHost>
<organismHost>
    <name type="scientific">Homo sapiens</name>
    <name type="common">Human</name>
    <dbReference type="NCBI Taxonomy" id="9606"/>
</organismHost>
<organismHost>
    <name type="scientific">Panthera pardus</name>
    <name type="common">Leopard</name>
    <name type="synonym">Felis pardus</name>
    <dbReference type="NCBI Taxonomy" id="9691"/>
</organismHost>
<organismHost>
    <name type="scientific">Panthera tigris</name>
    <name type="common">Tiger</name>
    <dbReference type="NCBI Taxonomy" id="9694"/>
</organismHost>
<organismHost>
    <name type="scientific">Sus scrofa</name>
    <name type="common">Pig</name>
    <dbReference type="NCBI Taxonomy" id="9823"/>
</organismHost>
<comment type="function">
    <text evidence="1">Catalyzes the removal of terminal sialic acid residues from viral and cellular glycoconjugates. Cleaves off the terminal sialic acids on the glycosylated HA during virus budding to facilitate virus release. Additionally helps virus spread through the circulation by further removing sialic acids from the cell surface. These cleavages prevent self-aggregation and ensure the efficient spread of the progeny virus from cell to cell. Otherwise, infection would be limited to one round of replication. Described as a receptor-destroying enzyme because it cleaves a terminal sialic acid from the cellular receptors. May facilitate viral invasion of the upper airways by cleaving the sialic acid moieties on the mucin of the airway epithelial cells. Likely to plays a role in the budding process through its association with lipid rafts during intracellular transport. May additionally display a raft-association independent effect on budding. Plays a role in the determination of host range restriction on replication and virulence. Sialidase activity in late endosome/lysosome traffic seems to enhance virus replication.</text>
</comment>
<comment type="catalytic activity">
    <reaction evidence="1">
        <text>Hydrolysis of alpha-(2-&gt;3)-, alpha-(2-&gt;6)-, alpha-(2-&gt;8)- glycosidic linkages of terminal sialic acid residues in oligosaccharides, glycoproteins, glycolipids, colominic acid and synthetic substrates.</text>
        <dbReference type="EC" id="3.2.1.18"/>
    </reaction>
</comment>
<comment type="cofactor">
    <cofactor evidence="1">
        <name>Ca(2+)</name>
        <dbReference type="ChEBI" id="CHEBI:29108"/>
    </cofactor>
</comment>
<comment type="activity regulation">
    <text evidence="1">Inhibited by the neuraminidase inhibitors zanamivir (Relenza) and oseltamivir (Tamiflu). These drugs interfere with the release of progeny virus from infected cells and are effective against all influenza strains. Resistance to neuraminidase inhibitors is quite rare.</text>
</comment>
<comment type="subunit">
    <text evidence="1">Homotetramer.</text>
</comment>
<comment type="subcellular location">
    <subcellularLocation>
        <location evidence="1">Virion membrane</location>
    </subcellularLocation>
    <subcellularLocation>
        <location evidence="1">Host apical cell membrane</location>
        <topology evidence="1">Single-pass type II membrane protein</topology>
    </subcellularLocation>
    <text evidence="1">Preferentially accumulates at the apical plasma membrane in infected polarized epithelial cells, which is the virus assembly site. Uses lipid rafts for cell surface transport and apical sorting. In the virion, forms a mushroom-shaped spike on the surface of the membrane.</text>
</comment>
<comment type="domain">
    <text evidence="1">Intact N-terminus is essential for virion morphogenesis. Possesses two apical sorting signals, one in the ectodomain, which is likely to be a glycan, and the other in the transmembrane domain. The transmembrane domain also plays a role in lipid raft association.</text>
</comment>
<comment type="PTM">
    <text evidence="1">N-glycosylated.</text>
</comment>
<comment type="miscellaneous">
    <text>The influenza A genome consist of 8 RNA segments. Genetic variation of hemagglutinin and/or neuraminidase genes results in the emergence of new influenza strains. The mechanism of variation can be the result of point mutations or the result of genetic reassortment between segments of two different strains.</text>
</comment>
<comment type="similarity">
    <text evidence="1">Belongs to the glycosyl hydrolase 34 family.</text>
</comment>